<proteinExistence type="inferred from homology"/>
<accession>A1D5T7</accession>
<reference key="1">
    <citation type="journal article" date="2008" name="PLoS Genet.">
        <title>Genomic islands in the pathogenic filamentous fungus Aspergillus fumigatus.</title>
        <authorList>
            <person name="Fedorova N.D."/>
            <person name="Khaldi N."/>
            <person name="Joardar V.S."/>
            <person name="Maiti R."/>
            <person name="Amedeo P."/>
            <person name="Anderson M.J."/>
            <person name="Crabtree J."/>
            <person name="Silva J.C."/>
            <person name="Badger J.H."/>
            <person name="Albarraq A."/>
            <person name="Angiuoli S."/>
            <person name="Bussey H."/>
            <person name="Bowyer P."/>
            <person name="Cotty P.J."/>
            <person name="Dyer P.S."/>
            <person name="Egan A."/>
            <person name="Galens K."/>
            <person name="Fraser-Liggett C.M."/>
            <person name="Haas B.J."/>
            <person name="Inman J.M."/>
            <person name="Kent R."/>
            <person name="Lemieux S."/>
            <person name="Malavazi I."/>
            <person name="Orvis J."/>
            <person name="Roemer T."/>
            <person name="Ronning C.M."/>
            <person name="Sundaram J.P."/>
            <person name="Sutton G."/>
            <person name="Turner G."/>
            <person name="Venter J.C."/>
            <person name="White O.R."/>
            <person name="Whitty B.R."/>
            <person name="Youngman P."/>
            <person name="Wolfe K.H."/>
            <person name="Goldman G.H."/>
            <person name="Wortman J.R."/>
            <person name="Jiang B."/>
            <person name="Denning D.W."/>
            <person name="Nierman W.C."/>
        </authorList>
    </citation>
    <scope>NUCLEOTIDE SEQUENCE [LARGE SCALE GENOMIC DNA]</scope>
    <source>
        <strain>ATCC 1020 / DSM 3700 / CBS 544.65 / FGSC A1164 / JCM 1740 / NRRL 181 / WB 181</strain>
    </source>
</reference>
<feature type="chain" id="PRO_0000402370" description="Catabolic 3-dehydroquinase 2">
    <location>
        <begin position="1"/>
        <end position="150"/>
    </location>
</feature>
<feature type="active site" description="Proton acceptor" evidence="1">
    <location>
        <position position="23"/>
    </location>
</feature>
<feature type="active site" description="Proton donor" evidence="1">
    <location>
        <position position="100"/>
    </location>
</feature>
<feature type="binding site" evidence="1">
    <location>
        <position position="74"/>
    </location>
    <ligand>
        <name>substrate</name>
    </ligand>
</feature>
<feature type="binding site" evidence="1">
    <location>
        <position position="80"/>
    </location>
    <ligand>
        <name>substrate</name>
    </ligand>
</feature>
<feature type="binding site" evidence="1">
    <location>
        <position position="87"/>
    </location>
    <ligand>
        <name>substrate</name>
    </ligand>
</feature>
<feature type="binding site" evidence="1">
    <location>
        <begin position="101"/>
        <end position="102"/>
    </location>
    <ligand>
        <name>substrate</name>
    </ligand>
</feature>
<feature type="binding site" evidence="1">
    <location>
        <position position="111"/>
    </location>
    <ligand>
        <name>substrate</name>
    </ligand>
</feature>
<feature type="site" description="Transition state stabilizer" evidence="1">
    <location>
        <position position="18"/>
    </location>
</feature>
<organism>
    <name type="scientific">Neosartorya fischeri (strain ATCC 1020 / DSM 3700 / CBS 544.65 / FGSC A1164 / JCM 1740 / NRRL 181 / WB 181)</name>
    <name type="common">Aspergillus fischerianus</name>
    <dbReference type="NCBI Taxonomy" id="331117"/>
    <lineage>
        <taxon>Eukaryota</taxon>
        <taxon>Fungi</taxon>
        <taxon>Dikarya</taxon>
        <taxon>Ascomycota</taxon>
        <taxon>Pezizomycotina</taxon>
        <taxon>Eurotiomycetes</taxon>
        <taxon>Eurotiomycetidae</taxon>
        <taxon>Eurotiales</taxon>
        <taxon>Aspergillaceae</taxon>
        <taxon>Aspergillus</taxon>
        <taxon>Aspergillus subgen. Fumigati</taxon>
    </lineage>
</organism>
<keyword id="KW-0456">Lyase</keyword>
<keyword id="KW-0672">Quinate metabolism</keyword>
<keyword id="KW-1185">Reference proteome</keyword>
<name>3DHQ2_NEOFI</name>
<gene>
    <name evidence="1" type="primary">qutE2</name>
    <name type="ORF">NFIA_062420</name>
</gene>
<dbReference type="EC" id="4.2.1.10" evidence="1"/>
<dbReference type="EMBL" id="DS027690">
    <property type="protein sequence ID" value="EAW21081.1"/>
    <property type="molecule type" value="Genomic_DNA"/>
</dbReference>
<dbReference type="RefSeq" id="XP_001262978.1">
    <property type="nucleotide sequence ID" value="XM_001262977.1"/>
</dbReference>
<dbReference type="SMR" id="A1D5T7"/>
<dbReference type="STRING" id="331117.A1D5T7"/>
<dbReference type="EnsemblFungi" id="EAW21081">
    <property type="protein sequence ID" value="EAW21081"/>
    <property type="gene ID" value="NFIA_062420"/>
</dbReference>
<dbReference type="GeneID" id="4589613"/>
<dbReference type="KEGG" id="nfi:NFIA_062420"/>
<dbReference type="VEuPathDB" id="FungiDB:NFIA_062420"/>
<dbReference type="eggNOG" id="ENOG502S1A9">
    <property type="taxonomic scope" value="Eukaryota"/>
</dbReference>
<dbReference type="HOGENOM" id="CLU_090968_1_0_1"/>
<dbReference type="OMA" id="VIECHIS"/>
<dbReference type="OrthoDB" id="8191625at2759"/>
<dbReference type="UniPathway" id="UPA00088">
    <property type="reaction ID" value="UER00178"/>
</dbReference>
<dbReference type="Proteomes" id="UP000006702">
    <property type="component" value="Unassembled WGS sequence"/>
</dbReference>
<dbReference type="GO" id="GO:0003855">
    <property type="term" value="F:3-dehydroquinate dehydratase activity"/>
    <property type="evidence" value="ECO:0007669"/>
    <property type="project" value="UniProtKB-UniRule"/>
</dbReference>
<dbReference type="GO" id="GO:0046279">
    <property type="term" value="P:3,4-dihydroxybenzoate biosynthetic process"/>
    <property type="evidence" value="ECO:0007669"/>
    <property type="project" value="UniProtKB-UniRule"/>
</dbReference>
<dbReference type="GO" id="GO:0019631">
    <property type="term" value="P:quinate catabolic process"/>
    <property type="evidence" value="ECO:0007669"/>
    <property type="project" value="TreeGrafter"/>
</dbReference>
<dbReference type="CDD" id="cd00466">
    <property type="entry name" value="DHQase_II"/>
    <property type="match status" value="1"/>
</dbReference>
<dbReference type="Gene3D" id="3.40.50.9100">
    <property type="entry name" value="Dehydroquinase, class II"/>
    <property type="match status" value="1"/>
</dbReference>
<dbReference type="HAMAP" id="MF_00169">
    <property type="entry name" value="AroQ"/>
    <property type="match status" value="1"/>
</dbReference>
<dbReference type="InterPro" id="IPR001874">
    <property type="entry name" value="DHquinase_II"/>
</dbReference>
<dbReference type="InterPro" id="IPR018509">
    <property type="entry name" value="DHquinase_II_CS"/>
</dbReference>
<dbReference type="InterPro" id="IPR036441">
    <property type="entry name" value="DHquinase_II_sf"/>
</dbReference>
<dbReference type="NCBIfam" id="TIGR01088">
    <property type="entry name" value="aroQ"/>
    <property type="match status" value="1"/>
</dbReference>
<dbReference type="NCBIfam" id="NF003804">
    <property type="entry name" value="PRK05395.1-1"/>
    <property type="match status" value="1"/>
</dbReference>
<dbReference type="NCBIfam" id="NF003805">
    <property type="entry name" value="PRK05395.1-2"/>
    <property type="match status" value="1"/>
</dbReference>
<dbReference type="NCBIfam" id="NF003806">
    <property type="entry name" value="PRK05395.1-3"/>
    <property type="match status" value="1"/>
</dbReference>
<dbReference type="NCBIfam" id="NF003807">
    <property type="entry name" value="PRK05395.1-4"/>
    <property type="match status" value="1"/>
</dbReference>
<dbReference type="PANTHER" id="PTHR21272">
    <property type="entry name" value="CATABOLIC 3-DEHYDROQUINASE"/>
    <property type="match status" value="1"/>
</dbReference>
<dbReference type="PANTHER" id="PTHR21272:SF3">
    <property type="entry name" value="CATABOLIC 3-DEHYDROQUINASE"/>
    <property type="match status" value="1"/>
</dbReference>
<dbReference type="Pfam" id="PF01220">
    <property type="entry name" value="DHquinase_II"/>
    <property type="match status" value="1"/>
</dbReference>
<dbReference type="PIRSF" id="PIRSF001399">
    <property type="entry name" value="DHquinase_II"/>
    <property type="match status" value="1"/>
</dbReference>
<dbReference type="SUPFAM" id="SSF52304">
    <property type="entry name" value="Type II 3-dehydroquinate dehydratase"/>
    <property type="match status" value="1"/>
</dbReference>
<dbReference type="PROSITE" id="PS01029">
    <property type="entry name" value="DEHYDROQUINASE_II"/>
    <property type="match status" value="1"/>
</dbReference>
<comment type="function">
    <text evidence="1">Is involved in the catabolism of quinate. Allows the utilization of quinate as carbon source via the beta-ketoadipate pathway.</text>
</comment>
<comment type="catalytic activity">
    <reaction evidence="1">
        <text>3-dehydroquinate = 3-dehydroshikimate + H2O</text>
        <dbReference type="Rhea" id="RHEA:21096"/>
        <dbReference type="ChEBI" id="CHEBI:15377"/>
        <dbReference type="ChEBI" id="CHEBI:16630"/>
        <dbReference type="ChEBI" id="CHEBI:32364"/>
        <dbReference type="EC" id="4.2.1.10"/>
    </reaction>
</comment>
<comment type="pathway">
    <text evidence="1">Aromatic compound metabolism; 3,4-dihydroxybenzoate biosynthesis; 3,4-dihydroxybenzoate from 3-dehydroquinate: step 1/2.</text>
</comment>
<comment type="subunit">
    <text evidence="1">Homododecamer. Adopts a ring-like structure, composed of an arrangement of two hexameric rings stacked on top of one another.</text>
</comment>
<comment type="similarity">
    <text evidence="1">Belongs to the type-II 3-dehydroquinase family.</text>
</comment>
<protein>
    <recommendedName>
        <fullName evidence="1">Catabolic 3-dehydroquinase 2</fullName>
        <shortName evidence="1">cDHQase 2</shortName>
        <ecNumber evidence="1">4.2.1.10</ecNumber>
    </recommendedName>
    <alternativeName>
        <fullName evidence="1">3-dehydroquinate dehydratase 2</fullName>
    </alternativeName>
</protein>
<sequence length="150" mass="16417">MPSILLINGPNLNLLGTREPHLYGSTTLPQLEDNAKALAASKGVKLESFQSNHEGQIVDRIHEARGHTDAIIINPGAFTHTSVAIRDALIGVSIPFIEVHITNVHAREEFRHHSYLSDKAAACIIGLGTYGYEAAIEYAVREIISAKYVY</sequence>
<evidence type="ECO:0000255" key="1">
    <source>
        <dbReference type="HAMAP-Rule" id="MF_03136"/>
    </source>
</evidence>